<gene>
    <name type="primary">Taf10</name>
    <name type="synonym">Taf2h</name>
    <name type="synonym">Tafii30</name>
</gene>
<proteinExistence type="evidence at protein level"/>
<reference key="1">
    <citation type="journal article" date="1999" name="EMBO J.">
        <title>Mammalian TAFII30 is required for cell cycle progression and specific differentiation programmes.</title>
        <authorList>
            <person name="Metzger D."/>
            <person name="Scheer E."/>
            <person name="Soldatov A."/>
            <person name="Tora L."/>
        </authorList>
    </citation>
    <scope>NUCLEOTIDE SEQUENCE [GENOMIC DNA]</scope>
    <scope>FUNCTION</scope>
</reference>
<reference key="2">
    <citation type="journal article" date="2005" name="Science">
        <title>The transcriptional landscape of the mammalian genome.</title>
        <authorList>
            <person name="Carninci P."/>
            <person name="Kasukawa T."/>
            <person name="Katayama S."/>
            <person name="Gough J."/>
            <person name="Frith M.C."/>
            <person name="Maeda N."/>
            <person name="Oyama R."/>
            <person name="Ravasi T."/>
            <person name="Lenhard B."/>
            <person name="Wells C."/>
            <person name="Kodzius R."/>
            <person name="Shimokawa K."/>
            <person name="Bajic V.B."/>
            <person name="Brenner S.E."/>
            <person name="Batalov S."/>
            <person name="Forrest A.R."/>
            <person name="Zavolan M."/>
            <person name="Davis M.J."/>
            <person name="Wilming L.G."/>
            <person name="Aidinis V."/>
            <person name="Allen J.E."/>
            <person name="Ambesi-Impiombato A."/>
            <person name="Apweiler R."/>
            <person name="Aturaliya R.N."/>
            <person name="Bailey T.L."/>
            <person name="Bansal M."/>
            <person name="Baxter L."/>
            <person name="Beisel K.W."/>
            <person name="Bersano T."/>
            <person name="Bono H."/>
            <person name="Chalk A.M."/>
            <person name="Chiu K.P."/>
            <person name="Choudhary V."/>
            <person name="Christoffels A."/>
            <person name="Clutterbuck D.R."/>
            <person name="Crowe M.L."/>
            <person name="Dalla E."/>
            <person name="Dalrymple B.P."/>
            <person name="de Bono B."/>
            <person name="Della Gatta G."/>
            <person name="di Bernardo D."/>
            <person name="Down T."/>
            <person name="Engstrom P."/>
            <person name="Fagiolini M."/>
            <person name="Faulkner G."/>
            <person name="Fletcher C.F."/>
            <person name="Fukushima T."/>
            <person name="Furuno M."/>
            <person name="Futaki S."/>
            <person name="Gariboldi M."/>
            <person name="Georgii-Hemming P."/>
            <person name="Gingeras T.R."/>
            <person name="Gojobori T."/>
            <person name="Green R.E."/>
            <person name="Gustincich S."/>
            <person name="Harbers M."/>
            <person name="Hayashi Y."/>
            <person name="Hensch T.K."/>
            <person name="Hirokawa N."/>
            <person name="Hill D."/>
            <person name="Huminiecki L."/>
            <person name="Iacono M."/>
            <person name="Ikeo K."/>
            <person name="Iwama A."/>
            <person name="Ishikawa T."/>
            <person name="Jakt M."/>
            <person name="Kanapin A."/>
            <person name="Katoh M."/>
            <person name="Kawasawa Y."/>
            <person name="Kelso J."/>
            <person name="Kitamura H."/>
            <person name="Kitano H."/>
            <person name="Kollias G."/>
            <person name="Krishnan S.P."/>
            <person name="Kruger A."/>
            <person name="Kummerfeld S.K."/>
            <person name="Kurochkin I.V."/>
            <person name="Lareau L.F."/>
            <person name="Lazarevic D."/>
            <person name="Lipovich L."/>
            <person name="Liu J."/>
            <person name="Liuni S."/>
            <person name="McWilliam S."/>
            <person name="Madan Babu M."/>
            <person name="Madera M."/>
            <person name="Marchionni L."/>
            <person name="Matsuda H."/>
            <person name="Matsuzawa S."/>
            <person name="Miki H."/>
            <person name="Mignone F."/>
            <person name="Miyake S."/>
            <person name="Morris K."/>
            <person name="Mottagui-Tabar S."/>
            <person name="Mulder N."/>
            <person name="Nakano N."/>
            <person name="Nakauchi H."/>
            <person name="Ng P."/>
            <person name="Nilsson R."/>
            <person name="Nishiguchi S."/>
            <person name="Nishikawa S."/>
            <person name="Nori F."/>
            <person name="Ohara O."/>
            <person name="Okazaki Y."/>
            <person name="Orlando V."/>
            <person name="Pang K.C."/>
            <person name="Pavan W.J."/>
            <person name="Pavesi G."/>
            <person name="Pesole G."/>
            <person name="Petrovsky N."/>
            <person name="Piazza S."/>
            <person name="Reed J."/>
            <person name="Reid J.F."/>
            <person name="Ring B.Z."/>
            <person name="Ringwald M."/>
            <person name="Rost B."/>
            <person name="Ruan Y."/>
            <person name="Salzberg S.L."/>
            <person name="Sandelin A."/>
            <person name="Schneider C."/>
            <person name="Schoenbach C."/>
            <person name="Sekiguchi K."/>
            <person name="Semple C.A."/>
            <person name="Seno S."/>
            <person name="Sessa L."/>
            <person name="Sheng Y."/>
            <person name="Shibata Y."/>
            <person name="Shimada H."/>
            <person name="Shimada K."/>
            <person name="Silva D."/>
            <person name="Sinclair B."/>
            <person name="Sperling S."/>
            <person name="Stupka E."/>
            <person name="Sugiura K."/>
            <person name="Sultana R."/>
            <person name="Takenaka Y."/>
            <person name="Taki K."/>
            <person name="Tammoja K."/>
            <person name="Tan S.L."/>
            <person name="Tang S."/>
            <person name="Taylor M.S."/>
            <person name="Tegner J."/>
            <person name="Teichmann S.A."/>
            <person name="Ueda H.R."/>
            <person name="van Nimwegen E."/>
            <person name="Verardo R."/>
            <person name="Wei C.L."/>
            <person name="Yagi K."/>
            <person name="Yamanishi H."/>
            <person name="Zabarovsky E."/>
            <person name="Zhu S."/>
            <person name="Zimmer A."/>
            <person name="Hide W."/>
            <person name="Bult C."/>
            <person name="Grimmond S.M."/>
            <person name="Teasdale R.D."/>
            <person name="Liu E.T."/>
            <person name="Brusic V."/>
            <person name="Quackenbush J."/>
            <person name="Wahlestedt C."/>
            <person name="Mattick J.S."/>
            <person name="Hume D.A."/>
            <person name="Kai C."/>
            <person name="Sasaki D."/>
            <person name="Tomaru Y."/>
            <person name="Fukuda S."/>
            <person name="Kanamori-Katayama M."/>
            <person name="Suzuki M."/>
            <person name="Aoki J."/>
            <person name="Arakawa T."/>
            <person name="Iida J."/>
            <person name="Imamura K."/>
            <person name="Itoh M."/>
            <person name="Kato T."/>
            <person name="Kawaji H."/>
            <person name="Kawagashira N."/>
            <person name="Kawashima T."/>
            <person name="Kojima M."/>
            <person name="Kondo S."/>
            <person name="Konno H."/>
            <person name="Nakano K."/>
            <person name="Ninomiya N."/>
            <person name="Nishio T."/>
            <person name="Okada M."/>
            <person name="Plessy C."/>
            <person name="Shibata K."/>
            <person name="Shiraki T."/>
            <person name="Suzuki S."/>
            <person name="Tagami M."/>
            <person name="Waki K."/>
            <person name="Watahiki A."/>
            <person name="Okamura-Oho Y."/>
            <person name="Suzuki H."/>
            <person name="Kawai J."/>
            <person name="Hayashizaki Y."/>
        </authorList>
    </citation>
    <scope>NUCLEOTIDE SEQUENCE [LARGE SCALE MRNA]</scope>
    <source>
        <strain>C57BL/6J</strain>
        <tissue>Cerebellum</tissue>
    </source>
</reference>
<reference key="3">
    <citation type="journal article" date="2004" name="Genome Res.">
        <title>The status, quality, and expansion of the NIH full-length cDNA project: the Mammalian Gene Collection (MGC).</title>
        <authorList>
            <consortium name="The MGC Project Team"/>
        </authorList>
    </citation>
    <scope>NUCLEOTIDE SEQUENCE [LARGE SCALE MRNA]</scope>
    <source>
        <strain>C57BL/6J</strain>
        <tissue>Brain</tissue>
        <tissue>Mammary tumor</tissue>
    </source>
</reference>
<reference key="4">
    <citation type="journal article" date="2001" name="Mol. Cell. Biol.">
        <title>The TFIID components human TAFII140 and Drosophila BIP2 (TAFII155) are novel metazoan homologues of yeast TAFII47 containing a histone fold and a PHD finger.</title>
        <authorList>
            <person name="Gangloff Y.G."/>
            <person name="Pointud J.-C."/>
            <person name="Thuault S."/>
            <person name="Carre L."/>
            <person name="Romier C."/>
            <person name="Muratoglu S."/>
            <person name="Brand M."/>
            <person name="Tora L."/>
            <person name="Couderc J.-L."/>
            <person name="Davidson I."/>
        </authorList>
    </citation>
    <scope>INTERACTION WITH TAF3</scope>
</reference>
<reference key="5">
    <citation type="journal article" date="2010" name="Cell">
        <title>A tissue-specific atlas of mouse protein phosphorylation and expression.</title>
        <authorList>
            <person name="Huttlin E.L."/>
            <person name="Jedrychowski M.P."/>
            <person name="Elias J.E."/>
            <person name="Goswami T."/>
            <person name="Rad R."/>
            <person name="Beausoleil S.A."/>
            <person name="Villen J."/>
            <person name="Haas W."/>
            <person name="Sowa M.E."/>
            <person name="Gygi S.P."/>
        </authorList>
    </citation>
    <scope>IDENTIFICATION BY MASS SPECTROMETRY [LARGE SCALE ANALYSIS]</scope>
    <source>
        <tissue>Heart</tissue>
        <tissue>Kidney</tissue>
        <tissue>Spleen</tissue>
        <tissue>Testis</tissue>
    </source>
</reference>
<reference key="6">
    <citation type="journal article" date="2015" name="Mol. Cell">
        <title>LOXL2 oxidizes methylated TAF10 and controls TFIID-dependent genes during neural progenitor differentiation.</title>
        <authorList>
            <person name="Iturbide A."/>
            <person name="Pascual-Reguant L."/>
            <person name="Fargas L."/>
            <person name="Cebria J.P."/>
            <person name="Alsina B."/>
            <person name="Garcia de Herreros A."/>
            <person name="Peiro S."/>
        </authorList>
    </citation>
    <scope>METHYLATION AT LYS-189</scope>
</reference>
<name>TAF10_MOUSE</name>
<comment type="function">
    <text evidence="1 3">The TFIID basal transcription factor complex plays a major role in the initiation of RNA polymerase II (Pol II)-dependent transcription. TFIID recognizes and binds promoters with or without a TATA box via its subunit TBP, a TATA-box-binding protein, and promotes assembly of the pre-initiation complex (PIC). The TFIID complex consists of TBP and TBP-associated factors (TAFs), including TAF1, TAF2, TAF3, TAF4, TAF5, TAF6, TAF7, TAF8, TAF9, TAF10, TAF11, TAF12 and TAF13. TAF10 is also component of the PCAF histone acetylase complex, the TATA-binding protein-free TAF complex (TFTC) and the STAGA transcription coactivator-HAT complex (By similarity). May regulate cyclin E expression (PubMed:10469660).</text>
</comment>
<comment type="subunit">
    <text evidence="1 4">Component of the TFIID basal transcription factor complex, composed of TATA-box-binding protein TBP, and a number of TBP-associated factors (TAFs), including TAF1, TAF2, TAF3, TAF4, TAF5, TAF6, TAF7, TAF8, TAF9, TAF10, TAF11, TAF12 and TAF13. Component of the TATA-binding protein-free TAF complex (TFTC), the PCAF histone acetylase complex and the STAGA transcription coactivator-HAT complex. The PCAF complex consists at least of TADA2L/ADA2, TADA3L/ADA3, SUPT3H, TAF5L TAF6L, TAF9, TAF10, TAF12 and TRRAP. The TFTC-HAT complex consists at least of TAF5L, TAF6L, TADA3L, SUPT3H, TAF2, TAF4, TAF5, GCN5L2/GCN5, TAF10 and TRRAP. The STAGA transcription coactivator-HAT complex consists at least of SUPT3H, GCN5L2, TAF5L, TAF6L, SUPT7L, TADA3L, TAD1L, TAF10, TAF12, TRRAP and TAF9. The STAGA core complex is associated with a subcomplex required for histone deubiquitination composed of ATXN7L3, ENY2 and USP22. Interacts with LOXL2. Interacts with TAF12 isoform TAFII20; the interaction is direct (By similarity). Interacts with TAF3 (PubMed:11438666).</text>
</comment>
<comment type="subcellular location">
    <subcellularLocation>
        <location evidence="1">Nucleus</location>
    </subcellularLocation>
</comment>
<comment type="domain">
    <text evidence="1">The [KR]-[STA]-K motif is specifically recognized by the SETD7 methyltransferase.</text>
</comment>
<comment type="PTM">
    <text evidence="1">Monomethylated at Lys-189 by SETD7, leading to increased affinity for RNA polymerase II.</text>
</comment>
<comment type="PTM">
    <text evidence="1">Lysine deamination at Lys-189 to form allysine is mediated by LOXL2. Allysine formation by LOXL2 results in release of TAF10 from promoters, leading to inhibition of TFIID-dependent transcription.</text>
</comment>
<comment type="similarity">
    <text evidence="6">Belongs to the TAF10 family.</text>
</comment>
<keyword id="KW-0007">Acetylation</keyword>
<keyword id="KW-0488">Methylation</keyword>
<keyword id="KW-0539">Nucleus</keyword>
<keyword id="KW-0597">Phosphoprotein</keyword>
<keyword id="KW-1185">Reference proteome</keyword>
<keyword id="KW-0804">Transcription</keyword>
<keyword id="KW-0805">Transcription regulation</keyword>
<evidence type="ECO:0000250" key="1">
    <source>
        <dbReference type="UniProtKB" id="Q12962"/>
    </source>
</evidence>
<evidence type="ECO:0000256" key="2">
    <source>
        <dbReference type="SAM" id="MobiDB-lite"/>
    </source>
</evidence>
<evidence type="ECO:0000269" key="3">
    <source>
    </source>
</evidence>
<evidence type="ECO:0000269" key="4">
    <source>
    </source>
</evidence>
<evidence type="ECO:0000269" key="5">
    <source>
    </source>
</evidence>
<evidence type="ECO:0000305" key="6"/>
<feature type="initiator methionine" description="Removed" evidence="1">
    <location>
        <position position="1"/>
    </location>
</feature>
<feature type="chain" id="PRO_0000118898" description="Transcription initiation factor TFIID subunit 10">
    <location>
        <begin position="2"/>
        <end position="218"/>
    </location>
</feature>
<feature type="region of interest" description="Disordered" evidence="2">
    <location>
        <begin position="27"/>
        <end position="50"/>
    </location>
</feature>
<feature type="region of interest" description="Disordered" evidence="2">
    <location>
        <begin position="64"/>
        <end position="86"/>
    </location>
</feature>
<feature type="short sequence motif" description="[KR]-[STA]-K motif">
    <location>
        <begin position="187"/>
        <end position="189"/>
    </location>
</feature>
<feature type="compositionally biased region" description="Low complexity" evidence="2">
    <location>
        <begin position="27"/>
        <end position="39"/>
    </location>
</feature>
<feature type="compositionally biased region" description="Low complexity" evidence="2">
    <location>
        <begin position="77"/>
        <end position="86"/>
    </location>
</feature>
<feature type="modified residue" description="N-acetylserine" evidence="1">
    <location>
        <position position="2"/>
    </location>
</feature>
<feature type="modified residue" description="Phosphoserine" evidence="1">
    <location>
        <position position="44"/>
    </location>
</feature>
<feature type="modified residue" description="Phosphothreonine" evidence="1">
    <location>
        <position position="48"/>
    </location>
</feature>
<feature type="modified residue" description="Allysine; alternate" evidence="1">
    <location>
        <position position="189"/>
    </location>
</feature>
<feature type="modified residue" description="N6,N6,N6-trimethyllysine; alternate" evidence="5">
    <location>
        <position position="189"/>
    </location>
</feature>
<feature type="sequence conflict" description="In Ref. 2; BAC32964." evidence="6" ref="2">
    <original>S</original>
    <variation>G</variation>
    <location>
        <position position="2"/>
    </location>
</feature>
<feature type="sequence conflict" description="In Ref. 1; CAB59510." evidence="6" ref="1">
    <original>APA</original>
    <variation>GSP</variation>
    <location>
        <begin position="29"/>
        <end position="31"/>
    </location>
</feature>
<protein>
    <recommendedName>
        <fullName>Transcription initiation factor TFIID subunit 10</fullName>
    </recommendedName>
    <alternativeName>
        <fullName>Transcription initiation factor TFIID 30 kDa subunit</fullName>
        <shortName>TAF(II)30</shortName>
        <shortName>TAFII-30</shortName>
        <shortName>TAFII30</shortName>
        <shortName>mTAFII30</shortName>
    </alternativeName>
</protein>
<organism>
    <name type="scientific">Mus musculus</name>
    <name type="common">Mouse</name>
    <dbReference type="NCBI Taxonomy" id="10090"/>
    <lineage>
        <taxon>Eukaryota</taxon>
        <taxon>Metazoa</taxon>
        <taxon>Chordata</taxon>
        <taxon>Craniata</taxon>
        <taxon>Vertebrata</taxon>
        <taxon>Euteleostomi</taxon>
        <taxon>Mammalia</taxon>
        <taxon>Eutheria</taxon>
        <taxon>Euarchontoglires</taxon>
        <taxon>Glires</taxon>
        <taxon>Rodentia</taxon>
        <taxon>Myomorpha</taxon>
        <taxon>Muroidea</taxon>
        <taxon>Muridae</taxon>
        <taxon>Murinae</taxon>
        <taxon>Mus</taxon>
        <taxon>Mus</taxon>
    </lineage>
</organism>
<sequence>MSCSGSGADPEAATACAASVAGPAPLVSAPAALPTSTAAESKASPAGTAGGPVAGVATAGTGPVAARAGEPAERRGPASVAAGGAAPPEGAMSNGVYALPSAANGEVKPVVSSTPLVDFLMQLEDYTPTIPDAVTGYYLNRAGFEASDPRIIRLISLAAQKFISDIANDALQHCKMKGTASGSSRSKSKDRKYTLTMEDLTPALSEYGINVKKPHYFT</sequence>
<dbReference type="EMBL" id="AK047115">
    <property type="protein sequence ID" value="BAC32964.1"/>
    <property type="molecule type" value="mRNA"/>
</dbReference>
<dbReference type="EMBL" id="AJ249987">
    <property type="protein sequence ID" value="CAB59510.1"/>
    <property type="molecule type" value="Genomic_DNA"/>
</dbReference>
<dbReference type="EMBL" id="BC031418">
    <property type="protein sequence ID" value="AAH31418.1"/>
    <property type="molecule type" value="mRNA"/>
</dbReference>
<dbReference type="EMBL" id="BC080311">
    <property type="protein sequence ID" value="AAH80311.1"/>
    <property type="molecule type" value="mRNA"/>
</dbReference>
<dbReference type="CCDS" id="CCDS21660.1"/>
<dbReference type="RefSeq" id="NP_064408.2">
    <property type="nucleotide sequence ID" value="NM_020024.3"/>
</dbReference>
<dbReference type="SMR" id="Q8K0H5"/>
<dbReference type="BioGRID" id="204885">
    <property type="interactions" value="4"/>
</dbReference>
<dbReference type="ComplexPortal" id="CPX-1024">
    <property type="entry name" value="PCAF histone acetylase complex"/>
</dbReference>
<dbReference type="ComplexPortal" id="CPX-6803">
    <property type="entry name" value="SAGA complex, KAT2B variant"/>
</dbReference>
<dbReference type="ComplexPortal" id="CPX-916">
    <property type="entry name" value="TFTC histone acetylation complex"/>
</dbReference>
<dbReference type="ComplexPortal" id="CPX-920">
    <property type="entry name" value="SAGA complex, KAT2A variant"/>
</dbReference>
<dbReference type="ComplexPortal" id="CPX-932">
    <property type="entry name" value="General transcription factor complex TFIID"/>
</dbReference>
<dbReference type="ComplexPortal" id="CPX-959">
    <property type="entry name" value="General transcription factor complex TFIID, Taf4b variant"/>
</dbReference>
<dbReference type="CORUM" id="Q8K0H5"/>
<dbReference type="DIP" id="DIP-59890N"/>
<dbReference type="FunCoup" id="Q8K0H5">
    <property type="interactions" value="1289"/>
</dbReference>
<dbReference type="IntAct" id="Q8K0H5">
    <property type="interactions" value="5"/>
</dbReference>
<dbReference type="MINT" id="Q8K0H5"/>
<dbReference type="STRING" id="10090.ENSMUSP00000118105"/>
<dbReference type="iPTMnet" id="Q8K0H5"/>
<dbReference type="PhosphoSitePlus" id="Q8K0H5"/>
<dbReference type="SwissPalm" id="Q8K0H5"/>
<dbReference type="PaxDb" id="10090-ENSMUSP00000118105"/>
<dbReference type="PeptideAtlas" id="Q8K0H5"/>
<dbReference type="ProteomicsDB" id="263242"/>
<dbReference type="Pumba" id="Q8K0H5"/>
<dbReference type="Antibodypedia" id="1301">
    <property type="antibodies" value="150 antibodies from 27 providers"/>
</dbReference>
<dbReference type="DNASU" id="24075"/>
<dbReference type="Ensembl" id="ENSMUST00000141116.2">
    <property type="protein sequence ID" value="ENSMUSP00000118105.2"/>
    <property type="gene ID" value="ENSMUSG00000043866.12"/>
</dbReference>
<dbReference type="GeneID" id="24075"/>
<dbReference type="KEGG" id="mmu:24075"/>
<dbReference type="UCSC" id="uc009izf.1">
    <property type="organism name" value="mouse"/>
</dbReference>
<dbReference type="AGR" id="MGI:1346320"/>
<dbReference type="CTD" id="6881"/>
<dbReference type="MGI" id="MGI:1346320">
    <property type="gene designation" value="Taf10"/>
</dbReference>
<dbReference type="VEuPathDB" id="HostDB:ENSMUSG00000043866"/>
<dbReference type="eggNOG" id="KOG3423">
    <property type="taxonomic scope" value="Eukaryota"/>
</dbReference>
<dbReference type="GeneTree" id="ENSGT00390000009368"/>
<dbReference type="HOGENOM" id="CLU_064104_1_0_1"/>
<dbReference type="InParanoid" id="Q8K0H5"/>
<dbReference type="OMA" id="SNCITND"/>
<dbReference type="OrthoDB" id="154356at2759"/>
<dbReference type="PhylomeDB" id="Q8K0H5"/>
<dbReference type="TreeFam" id="TF313156"/>
<dbReference type="Reactome" id="R-MMU-5689880">
    <property type="pathway name" value="Ub-specific processing proteases"/>
</dbReference>
<dbReference type="Reactome" id="R-MMU-674695">
    <property type="pathway name" value="RNA Polymerase II Pre-transcription Events"/>
</dbReference>
<dbReference type="Reactome" id="R-MMU-6804756">
    <property type="pathway name" value="Regulation of TP53 Activity through Phosphorylation"/>
</dbReference>
<dbReference type="Reactome" id="R-MMU-73776">
    <property type="pathway name" value="RNA Polymerase II Promoter Escape"/>
</dbReference>
<dbReference type="Reactome" id="R-MMU-73779">
    <property type="pathway name" value="RNA Polymerase II Transcription Pre-Initiation And Promoter Opening"/>
</dbReference>
<dbReference type="Reactome" id="R-MMU-75953">
    <property type="pathway name" value="RNA Polymerase II Transcription Initiation"/>
</dbReference>
<dbReference type="Reactome" id="R-MMU-76042">
    <property type="pathway name" value="RNA Polymerase II Transcription Initiation And Promoter Clearance"/>
</dbReference>
<dbReference type="BioGRID-ORCS" id="24075">
    <property type="hits" value="21 hits in 87 CRISPR screens"/>
</dbReference>
<dbReference type="ChiTaRS" id="Taf10">
    <property type="organism name" value="mouse"/>
</dbReference>
<dbReference type="PRO" id="PR:Q8K0H5"/>
<dbReference type="Proteomes" id="UP000000589">
    <property type="component" value="Chromosome 7"/>
</dbReference>
<dbReference type="RNAct" id="Q8K0H5">
    <property type="molecule type" value="protein"/>
</dbReference>
<dbReference type="Bgee" id="ENSMUSG00000043866">
    <property type="expression patterns" value="Expressed in yolk sac and 190 other cell types or tissues"/>
</dbReference>
<dbReference type="GO" id="GO:0001673">
    <property type="term" value="C:male germ cell nucleus"/>
    <property type="evidence" value="ECO:0000314"/>
    <property type="project" value="MGI"/>
</dbReference>
<dbReference type="GO" id="GO:0005634">
    <property type="term" value="C:nucleus"/>
    <property type="evidence" value="ECO:0000314"/>
    <property type="project" value="MGI"/>
</dbReference>
<dbReference type="GO" id="GO:0048471">
    <property type="term" value="C:perinuclear region of cytoplasm"/>
    <property type="evidence" value="ECO:0007669"/>
    <property type="project" value="Ensembl"/>
</dbReference>
<dbReference type="GO" id="GO:0000124">
    <property type="term" value="C:SAGA complex"/>
    <property type="evidence" value="ECO:0000303"/>
    <property type="project" value="ComplexPortal"/>
</dbReference>
<dbReference type="GO" id="GO:0005669">
    <property type="term" value="C:transcription factor TFIID complex"/>
    <property type="evidence" value="ECO:0000266"/>
    <property type="project" value="MGI"/>
</dbReference>
<dbReference type="GO" id="GO:0033276">
    <property type="term" value="C:transcription factor TFTC complex"/>
    <property type="evidence" value="ECO:0000303"/>
    <property type="project" value="ComplexPortal"/>
</dbReference>
<dbReference type="GO" id="GO:0097550">
    <property type="term" value="C:transcription preinitiation complex"/>
    <property type="evidence" value="ECO:0000314"/>
    <property type="project" value="MGI"/>
</dbReference>
<dbReference type="GO" id="GO:0003677">
    <property type="term" value="F:DNA binding"/>
    <property type="evidence" value="ECO:0000314"/>
    <property type="project" value="MGI"/>
</dbReference>
<dbReference type="GO" id="GO:0004402">
    <property type="term" value="F:histone acetyltransferase activity"/>
    <property type="evidence" value="ECO:0007669"/>
    <property type="project" value="Ensembl"/>
</dbReference>
<dbReference type="GO" id="GO:0042802">
    <property type="term" value="F:identical protein binding"/>
    <property type="evidence" value="ECO:0007669"/>
    <property type="project" value="Ensembl"/>
</dbReference>
<dbReference type="GO" id="GO:0030331">
    <property type="term" value="F:nuclear estrogen receptor binding"/>
    <property type="evidence" value="ECO:0007669"/>
    <property type="project" value="Ensembl"/>
</dbReference>
<dbReference type="GO" id="GO:1990841">
    <property type="term" value="F:promoter-specific chromatin binding"/>
    <property type="evidence" value="ECO:0000314"/>
    <property type="project" value="MGI"/>
</dbReference>
<dbReference type="GO" id="GO:0070063">
    <property type="term" value="F:RNA polymerase binding"/>
    <property type="evidence" value="ECO:0007669"/>
    <property type="project" value="Ensembl"/>
</dbReference>
<dbReference type="GO" id="GO:0016251">
    <property type="term" value="F:RNA polymerase II general transcription initiation factor activity"/>
    <property type="evidence" value="ECO:0007669"/>
    <property type="project" value="Ensembl"/>
</dbReference>
<dbReference type="GO" id="GO:1905069">
    <property type="term" value="P:allantois development"/>
    <property type="evidence" value="ECO:0000315"/>
    <property type="project" value="MGI"/>
</dbReference>
<dbReference type="GO" id="GO:0006915">
    <property type="term" value="P:apoptotic process"/>
    <property type="evidence" value="ECO:0000315"/>
    <property type="project" value="MGI"/>
</dbReference>
<dbReference type="GO" id="GO:0001892">
    <property type="term" value="P:embryonic placenta development"/>
    <property type="evidence" value="ECO:0000315"/>
    <property type="project" value="MGI"/>
</dbReference>
<dbReference type="GO" id="GO:0000082">
    <property type="term" value="P:G1/S transition of mitotic cell cycle"/>
    <property type="evidence" value="ECO:0000315"/>
    <property type="project" value="MGI"/>
</dbReference>
<dbReference type="GO" id="GO:0010467">
    <property type="term" value="P:gene expression"/>
    <property type="evidence" value="ECO:0000315"/>
    <property type="project" value="MGI"/>
</dbReference>
<dbReference type="GO" id="GO:0070365">
    <property type="term" value="P:hepatocyte differentiation"/>
    <property type="evidence" value="ECO:0000315"/>
    <property type="project" value="MGI"/>
</dbReference>
<dbReference type="GO" id="GO:0001701">
    <property type="term" value="P:in utero embryonic development"/>
    <property type="evidence" value="ECO:0000315"/>
    <property type="project" value="MGI"/>
</dbReference>
<dbReference type="GO" id="GO:0048371">
    <property type="term" value="P:lateral mesodermal cell differentiation"/>
    <property type="evidence" value="ECO:0000315"/>
    <property type="project" value="MGI"/>
</dbReference>
<dbReference type="GO" id="GO:0060173">
    <property type="term" value="P:limb development"/>
    <property type="evidence" value="ECO:0000315"/>
    <property type="project" value="MGI"/>
</dbReference>
<dbReference type="GO" id="GO:0001889">
    <property type="term" value="P:liver development"/>
    <property type="evidence" value="ECO:0000315"/>
    <property type="project" value="MGI"/>
</dbReference>
<dbReference type="GO" id="GO:0042789">
    <property type="term" value="P:mRNA transcription by RNA polymerase II"/>
    <property type="evidence" value="ECO:0000266"/>
    <property type="project" value="ComplexPortal"/>
</dbReference>
<dbReference type="GO" id="GO:0035264">
    <property type="term" value="P:multicellular organism growth"/>
    <property type="evidence" value="ECO:0000315"/>
    <property type="project" value="MGI"/>
</dbReference>
<dbReference type="GO" id="GO:0045893">
    <property type="term" value="P:positive regulation of DNA-templated transcription"/>
    <property type="evidence" value="ECO:0000303"/>
    <property type="project" value="ComplexPortal"/>
</dbReference>
<dbReference type="GO" id="GO:0060261">
    <property type="term" value="P:positive regulation of transcription initiation by RNA polymerase II"/>
    <property type="evidence" value="ECO:0000266"/>
    <property type="project" value="ComplexPortal"/>
</dbReference>
<dbReference type="GO" id="GO:0065003">
    <property type="term" value="P:protein-containing complex assembly"/>
    <property type="evidence" value="ECO:0000315"/>
    <property type="project" value="MGI"/>
</dbReference>
<dbReference type="GO" id="GO:0006282">
    <property type="term" value="P:regulation of DNA repair"/>
    <property type="evidence" value="ECO:0000303"/>
    <property type="project" value="ComplexPortal"/>
</dbReference>
<dbReference type="GO" id="GO:0006355">
    <property type="term" value="P:regulation of DNA-templated transcription"/>
    <property type="evidence" value="ECO:0000304"/>
    <property type="project" value="MGI"/>
</dbReference>
<dbReference type="GO" id="GO:0010468">
    <property type="term" value="P:regulation of gene expression"/>
    <property type="evidence" value="ECO:0000315"/>
    <property type="project" value="MGI"/>
</dbReference>
<dbReference type="GO" id="GO:0043484">
    <property type="term" value="P:regulation of RNA splicing"/>
    <property type="evidence" value="ECO:0000303"/>
    <property type="project" value="ComplexPortal"/>
</dbReference>
<dbReference type="GO" id="GO:0006357">
    <property type="term" value="P:regulation of transcription by RNA polymerase II"/>
    <property type="evidence" value="ECO:0000266"/>
    <property type="project" value="ComplexPortal"/>
</dbReference>
<dbReference type="GO" id="GO:0051123">
    <property type="term" value="P:RNA polymerase II preinitiation complex assembly"/>
    <property type="evidence" value="ECO:0000315"/>
    <property type="project" value="MGI"/>
</dbReference>
<dbReference type="GO" id="GO:0036285">
    <property type="term" value="P:SAGA complex assembly"/>
    <property type="evidence" value="ECO:0000315"/>
    <property type="project" value="MGI"/>
</dbReference>
<dbReference type="GO" id="GO:0001756">
    <property type="term" value="P:somitogenesis"/>
    <property type="evidence" value="ECO:0000315"/>
    <property type="project" value="MGI"/>
</dbReference>
<dbReference type="CDD" id="cd07982">
    <property type="entry name" value="HFD_TAF10"/>
    <property type="match status" value="1"/>
</dbReference>
<dbReference type="InterPro" id="IPR003923">
    <property type="entry name" value="TAF10"/>
</dbReference>
<dbReference type="PANTHER" id="PTHR21242">
    <property type="entry name" value="TRANSCRIPTION INITIATION FACTOR TFIID SUBUNIT 10"/>
    <property type="match status" value="1"/>
</dbReference>
<dbReference type="PANTHER" id="PTHR21242:SF0">
    <property type="entry name" value="TRANSCRIPTION INITIATION FACTOR TFIID SUBUNIT 10"/>
    <property type="match status" value="1"/>
</dbReference>
<dbReference type="Pfam" id="PF03540">
    <property type="entry name" value="TAF10"/>
    <property type="match status" value="1"/>
</dbReference>
<dbReference type="PIRSF" id="PIRSF017246">
    <property type="entry name" value="TFIID_TAF10"/>
    <property type="match status" value="1"/>
</dbReference>
<dbReference type="PRINTS" id="PR01443">
    <property type="entry name" value="TFIID30KDSUB"/>
</dbReference>
<accession>Q8K0H5</accession>
<accession>Q8C8H2</accession>
<accession>Q9QYY5</accession>